<organism>
    <name type="scientific">Saccharomyces cerevisiae (strain ATCC 204508 / S288c)</name>
    <name type="common">Baker's yeast</name>
    <dbReference type="NCBI Taxonomy" id="559292"/>
    <lineage>
        <taxon>Eukaryota</taxon>
        <taxon>Fungi</taxon>
        <taxon>Dikarya</taxon>
        <taxon>Ascomycota</taxon>
        <taxon>Saccharomycotina</taxon>
        <taxon>Saccharomycetes</taxon>
        <taxon>Saccharomycetales</taxon>
        <taxon>Saccharomycetaceae</taxon>
        <taxon>Saccharomyces</taxon>
    </lineage>
</organism>
<evidence type="ECO:0000269" key="1">
    <source>
    </source>
</evidence>
<evidence type="ECO:0000305" key="2"/>
<accession>Q07921</accession>
<accession>D6VY12</accession>
<gene>
    <name type="primary">TEN1</name>
    <name type="ordered locus">YLR010C</name>
</gene>
<protein>
    <recommendedName>
        <fullName>Telomere length regulation protein TEN1</fullName>
    </recommendedName>
    <alternativeName>
        <fullName>Protein telomeric pathways with STN1</fullName>
    </alternativeName>
</protein>
<comment type="function">
    <text evidence="1">Has a role in telomere length regulation and telomere end protection. Acts as an inhibitor of telomerase loading through its interaction with CDC13.</text>
</comment>
<comment type="subunit">
    <text evidence="1">Interacts with CDC13 and STN1.</text>
</comment>
<comment type="interaction">
    <interactant intactId="EBI-35131">
        <id>Q07921</id>
    </interactant>
    <interactant intactId="EBI-18427">
        <id>P38960</id>
        <label>STN1</label>
    </interactant>
    <organismsDiffer>false</organismsDiffer>
    <experiments>12</experiments>
</comment>
<comment type="subcellular location">
    <subcellularLocation>
        <location evidence="2">Nucleus</location>
    </subcellularLocation>
    <subcellularLocation>
        <location evidence="2">Chromosome</location>
        <location evidence="2">Telomere</location>
    </subcellularLocation>
</comment>
<sequence>MSQLVLDLKCLKDKIATNYDIHNNVYGGNGMEPNIIHPSKRFRIVVRLVDFLFCKSDEEFIKGFFCQMIVRNLHCLNSTNGAEEMRLYMSERLFSAHKDDLRLINGQVLDVRIGVWYGIHQSPPIFEIIDFKILSRNDVRDFCEFVKSPLGEKFLNISNS</sequence>
<reference key="1">
    <citation type="journal article" date="2001" name="EMBO J.">
        <title>Ten1 functions in telomere end protection and length regulation in association with Stn1 and Cdc13.</title>
        <authorList>
            <person name="Grandin N."/>
            <person name="Damon C."/>
            <person name="Charbonneau M."/>
        </authorList>
    </citation>
    <scope>NUCLEOTIDE SEQUENCE [GENOMIC DNA]</scope>
    <scope>FUNCTION</scope>
    <scope>INTERACTION WITH CDC13 AND STN1</scope>
</reference>
<reference key="2">
    <citation type="journal article" date="1997" name="Nature">
        <title>The nucleotide sequence of Saccharomyces cerevisiae chromosome XII.</title>
        <authorList>
            <person name="Johnston M."/>
            <person name="Hillier L.W."/>
            <person name="Riles L."/>
            <person name="Albermann K."/>
            <person name="Andre B."/>
            <person name="Ansorge W."/>
            <person name="Benes V."/>
            <person name="Brueckner M."/>
            <person name="Delius H."/>
            <person name="Dubois E."/>
            <person name="Duesterhoeft A."/>
            <person name="Entian K.-D."/>
            <person name="Floeth M."/>
            <person name="Goffeau A."/>
            <person name="Hebling U."/>
            <person name="Heumann K."/>
            <person name="Heuss-Neitzel D."/>
            <person name="Hilbert H."/>
            <person name="Hilger F."/>
            <person name="Kleine K."/>
            <person name="Koetter P."/>
            <person name="Louis E.J."/>
            <person name="Messenguy F."/>
            <person name="Mewes H.-W."/>
            <person name="Miosga T."/>
            <person name="Moestl D."/>
            <person name="Mueller-Auer S."/>
            <person name="Nentwich U."/>
            <person name="Obermaier B."/>
            <person name="Piravandi E."/>
            <person name="Pohl T.M."/>
            <person name="Portetelle D."/>
            <person name="Purnelle B."/>
            <person name="Rechmann S."/>
            <person name="Rieger M."/>
            <person name="Rinke M."/>
            <person name="Rose M."/>
            <person name="Scharfe M."/>
            <person name="Scherens B."/>
            <person name="Scholler P."/>
            <person name="Schwager C."/>
            <person name="Schwarz S."/>
            <person name="Underwood A.P."/>
            <person name="Urrestarazu L.A."/>
            <person name="Vandenbol M."/>
            <person name="Verhasselt P."/>
            <person name="Vierendeels F."/>
            <person name="Voet M."/>
            <person name="Volckaert G."/>
            <person name="Voss H."/>
            <person name="Wambutt R."/>
            <person name="Wedler E."/>
            <person name="Wedler H."/>
            <person name="Zimmermann F.K."/>
            <person name="Zollner A."/>
            <person name="Hani J."/>
            <person name="Hoheisel J.D."/>
        </authorList>
    </citation>
    <scope>NUCLEOTIDE SEQUENCE [LARGE SCALE GENOMIC DNA]</scope>
    <source>
        <strain>ATCC 204508 / S288c</strain>
    </source>
</reference>
<reference key="3">
    <citation type="journal article" date="2014" name="G3 (Bethesda)">
        <title>The reference genome sequence of Saccharomyces cerevisiae: Then and now.</title>
        <authorList>
            <person name="Engel S.R."/>
            <person name="Dietrich F.S."/>
            <person name="Fisk D.G."/>
            <person name="Binkley G."/>
            <person name="Balakrishnan R."/>
            <person name="Costanzo M.C."/>
            <person name="Dwight S.S."/>
            <person name="Hitz B.C."/>
            <person name="Karra K."/>
            <person name="Nash R.S."/>
            <person name="Weng S."/>
            <person name="Wong E.D."/>
            <person name="Lloyd P."/>
            <person name="Skrzypek M.S."/>
            <person name="Miyasato S.R."/>
            <person name="Simison M."/>
            <person name="Cherry J.M."/>
        </authorList>
    </citation>
    <scope>GENOME REANNOTATION</scope>
    <source>
        <strain>ATCC 204508 / S288c</strain>
    </source>
</reference>
<reference key="4">
    <citation type="journal article" date="2007" name="Genome Res.">
        <title>Approaching a complete repository of sequence-verified protein-encoding clones for Saccharomyces cerevisiae.</title>
        <authorList>
            <person name="Hu Y."/>
            <person name="Rolfs A."/>
            <person name="Bhullar B."/>
            <person name="Murthy T.V.S."/>
            <person name="Zhu C."/>
            <person name="Berger M.F."/>
            <person name="Camargo A.A."/>
            <person name="Kelley F."/>
            <person name="McCarron S."/>
            <person name="Jepson D."/>
            <person name="Richardson A."/>
            <person name="Raphael J."/>
            <person name="Moreira D."/>
            <person name="Taycher E."/>
            <person name="Zuo D."/>
            <person name="Mohr S."/>
            <person name="Kane M.F."/>
            <person name="Williamson J."/>
            <person name="Simpson A.J.G."/>
            <person name="Bulyk M.L."/>
            <person name="Harlow E."/>
            <person name="Marsischky G."/>
            <person name="Kolodner R.D."/>
            <person name="LaBaer J."/>
        </authorList>
    </citation>
    <scope>NUCLEOTIDE SEQUENCE [GENOMIC DNA]</scope>
    <source>
        <strain>ATCC 204508 / S288c</strain>
    </source>
</reference>
<name>TEN1_YEAST</name>
<keyword id="KW-0158">Chromosome</keyword>
<keyword id="KW-0539">Nucleus</keyword>
<keyword id="KW-1185">Reference proteome</keyword>
<keyword id="KW-0779">Telomere</keyword>
<feature type="chain" id="PRO_0000270926" description="Telomere length regulation protein TEN1">
    <location>
        <begin position="1"/>
        <end position="160"/>
    </location>
</feature>
<dbReference type="EMBL" id="AJ296344">
    <property type="protein sequence ID" value="CAC24568.1"/>
    <property type="molecule type" value="Genomic_DNA"/>
</dbReference>
<dbReference type="EMBL" id="Z73182">
    <property type="protein sequence ID" value="CAA97532.1"/>
    <property type="molecule type" value="Genomic_DNA"/>
</dbReference>
<dbReference type="EMBL" id="AY558198">
    <property type="protein sequence ID" value="AAS56524.1"/>
    <property type="molecule type" value="Genomic_DNA"/>
</dbReference>
<dbReference type="EMBL" id="BK006945">
    <property type="protein sequence ID" value="DAA09328.1"/>
    <property type="molecule type" value="Genomic_DNA"/>
</dbReference>
<dbReference type="PIR" id="S64832">
    <property type="entry name" value="S64832"/>
</dbReference>
<dbReference type="RefSeq" id="NP_013110.1">
    <property type="nucleotide sequence ID" value="NM_001181897.1"/>
</dbReference>
<dbReference type="SMR" id="Q07921"/>
<dbReference type="BioGRID" id="31283">
    <property type="interactions" value="31"/>
</dbReference>
<dbReference type="ComplexPortal" id="CPX-15">
    <property type="entry name" value="CST complex"/>
</dbReference>
<dbReference type="DIP" id="DIP-5926N"/>
<dbReference type="FunCoup" id="Q07921">
    <property type="interactions" value="30"/>
</dbReference>
<dbReference type="IntAct" id="Q07921">
    <property type="interactions" value="2"/>
</dbReference>
<dbReference type="STRING" id="4932.YLR010C"/>
<dbReference type="PaxDb" id="4932-YLR010C"/>
<dbReference type="PeptideAtlas" id="Q07921"/>
<dbReference type="TopDownProteomics" id="Q07921"/>
<dbReference type="EnsemblFungi" id="YLR010C_mRNA">
    <property type="protein sequence ID" value="YLR010C"/>
    <property type="gene ID" value="YLR010C"/>
</dbReference>
<dbReference type="GeneID" id="850696"/>
<dbReference type="KEGG" id="sce:YLR010C"/>
<dbReference type="AGR" id="SGD:S000004000"/>
<dbReference type="SGD" id="S000004000">
    <property type="gene designation" value="TEN1"/>
</dbReference>
<dbReference type="VEuPathDB" id="FungiDB:YLR010C"/>
<dbReference type="HOGENOM" id="CLU_1653134_0_0_1"/>
<dbReference type="InParanoid" id="Q07921"/>
<dbReference type="OMA" id="XSDEEFI"/>
<dbReference type="OrthoDB" id="4038502at2759"/>
<dbReference type="BioCyc" id="YEAST:G3O-32171-MONOMER"/>
<dbReference type="BioGRID-ORCS" id="850696">
    <property type="hits" value="6 hits in 10 CRISPR screens"/>
</dbReference>
<dbReference type="PRO" id="PR:Q07921"/>
<dbReference type="Proteomes" id="UP000002311">
    <property type="component" value="Chromosome XII"/>
</dbReference>
<dbReference type="RNAct" id="Q07921">
    <property type="molecule type" value="protein"/>
</dbReference>
<dbReference type="GO" id="GO:0000781">
    <property type="term" value="C:chromosome, telomeric region"/>
    <property type="evidence" value="ECO:0000303"/>
    <property type="project" value="ComplexPortal"/>
</dbReference>
<dbReference type="GO" id="GO:1990879">
    <property type="term" value="C:CST complex"/>
    <property type="evidence" value="ECO:0000353"/>
    <property type="project" value="SGD"/>
</dbReference>
<dbReference type="GO" id="GO:0043047">
    <property type="term" value="F:single-stranded telomeric DNA binding"/>
    <property type="evidence" value="ECO:0000314"/>
    <property type="project" value="SGD"/>
</dbReference>
<dbReference type="GO" id="GO:0003711">
    <property type="term" value="F:transcription elongation factor activity"/>
    <property type="evidence" value="ECO:0000315"/>
    <property type="project" value="SGD"/>
</dbReference>
<dbReference type="GO" id="GO:0061770">
    <property type="term" value="F:translation elongation factor binding"/>
    <property type="evidence" value="ECO:0000314"/>
    <property type="project" value="SGD"/>
</dbReference>
<dbReference type="GO" id="GO:0032205">
    <property type="term" value="P:negative regulation of telomere maintenance"/>
    <property type="evidence" value="ECO:0000315"/>
    <property type="project" value="SGD"/>
</dbReference>
<dbReference type="GO" id="GO:0032210">
    <property type="term" value="P:regulation of telomere maintenance via telomerase"/>
    <property type="evidence" value="ECO:0000303"/>
    <property type="project" value="ComplexPortal"/>
</dbReference>
<dbReference type="GO" id="GO:0006357">
    <property type="term" value="P:regulation of transcription by RNA polymerase II"/>
    <property type="evidence" value="ECO:0000315"/>
    <property type="project" value="SGD"/>
</dbReference>
<dbReference type="GO" id="GO:0016233">
    <property type="term" value="P:telomere capping"/>
    <property type="evidence" value="ECO:0000315"/>
    <property type="project" value="SGD"/>
</dbReference>
<dbReference type="GO" id="GO:0007004">
    <property type="term" value="P:telomere maintenance via telomerase"/>
    <property type="evidence" value="ECO:0000315"/>
    <property type="project" value="SGD"/>
</dbReference>
<dbReference type="CDD" id="cd23707">
    <property type="entry name" value="Ten1_OBF"/>
    <property type="match status" value="1"/>
</dbReference>
<proteinExistence type="evidence at protein level"/>